<protein>
    <recommendedName>
        <fullName evidence="1">UPF0237 protein SMU_72</fullName>
    </recommendedName>
</protein>
<dbReference type="EMBL" id="AE014133">
    <property type="protein sequence ID" value="AAN57858.1"/>
    <property type="status" value="ALT_INIT"/>
    <property type="molecule type" value="Genomic_DNA"/>
</dbReference>
<dbReference type="RefSeq" id="NP_720552.3">
    <property type="nucleotide sequence ID" value="NC_004350.2"/>
</dbReference>
<dbReference type="RefSeq" id="WP_002263408.1">
    <property type="nucleotide sequence ID" value="NC_004350.2"/>
</dbReference>
<dbReference type="SMR" id="Q8DWH8"/>
<dbReference type="STRING" id="210007.SMU_72"/>
<dbReference type="KEGG" id="smu:SMU_72"/>
<dbReference type="PATRIC" id="fig|210007.7.peg.62"/>
<dbReference type="eggNOG" id="COG3830">
    <property type="taxonomic scope" value="Bacteria"/>
</dbReference>
<dbReference type="HOGENOM" id="CLU_155669_2_0_9"/>
<dbReference type="OrthoDB" id="9803078at2"/>
<dbReference type="PhylomeDB" id="Q8DWH8"/>
<dbReference type="Proteomes" id="UP000002512">
    <property type="component" value="Chromosome"/>
</dbReference>
<dbReference type="CDD" id="cd04872">
    <property type="entry name" value="ACT_1ZPV"/>
    <property type="match status" value="1"/>
</dbReference>
<dbReference type="FunFam" id="3.30.70.260:FF:000032">
    <property type="entry name" value="UPF0237 protein SP_0238"/>
    <property type="match status" value="1"/>
</dbReference>
<dbReference type="Gene3D" id="3.30.70.260">
    <property type="match status" value="1"/>
</dbReference>
<dbReference type="HAMAP" id="MF_01054">
    <property type="entry name" value="UPF0237"/>
    <property type="match status" value="1"/>
</dbReference>
<dbReference type="InterPro" id="IPR045865">
    <property type="entry name" value="ACT-like_dom_sf"/>
</dbReference>
<dbReference type="InterPro" id="IPR002912">
    <property type="entry name" value="ACT_dom"/>
</dbReference>
<dbReference type="InterPro" id="IPR050990">
    <property type="entry name" value="UPF0237/GcvR_regulator"/>
</dbReference>
<dbReference type="InterPro" id="IPR022986">
    <property type="entry name" value="UPF0237_ACT"/>
</dbReference>
<dbReference type="NCBIfam" id="NF001220">
    <property type="entry name" value="PRK00194.1"/>
    <property type="match status" value="1"/>
</dbReference>
<dbReference type="PANTHER" id="PTHR34875">
    <property type="entry name" value="UPF0237 PROTEIN MJ1558"/>
    <property type="match status" value="1"/>
</dbReference>
<dbReference type="PANTHER" id="PTHR34875:SF6">
    <property type="entry name" value="UPF0237 PROTEIN MJ1558"/>
    <property type="match status" value="1"/>
</dbReference>
<dbReference type="Pfam" id="PF13740">
    <property type="entry name" value="ACT_6"/>
    <property type="match status" value="1"/>
</dbReference>
<dbReference type="SUPFAM" id="SSF55021">
    <property type="entry name" value="ACT-like"/>
    <property type="match status" value="1"/>
</dbReference>
<dbReference type="PROSITE" id="PS51671">
    <property type="entry name" value="ACT"/>
    <property type="match status" value="1"/>
</dbReference>
<keyword id="KW-1185">Reference proteome</keyword>
<gene>
    <name type="ordered locus">SMU_72</name>
</gene>
<sequence length="88" mass="9669">MKAIITVVGKDRTGIVAGVSTKIAELGLNIDDITQTVLDEYFTMMAVVSSQESQDFAQLRKEFEAFGETLNVKINIQSSAIFDAMHNL</sequence>
<feature type="chain" id="PRO_0000219906" description="UPF0237 protein SMU_72">
    <location>
        <begin position="1"/>
        <end position="88"/>
    </location>
</feature>
<feature type="domain" description="ACT" evidence="1">
    <location>
        <begin position="4"/>
        <end position="77"/>
    </location>
</feature>
<accession>Q8DWH8</accession>
<reference key="1">
    <citation type="journal article" date="2002" name="Proc. Natl. Acad. Sci. U.S.A.">
        <title>Genome sequence of Streptococcus mutans UA159, a cariogenic dental pathogen.</title>
        <authorList>
            <person name="Ajdic D.J."/>
            <person name="McShan W.M."/>
            <person name="McLaughlin R.E."/>
            <person name="Savic G."/>
            <person name="Chang J."/>
            <person name="Carson M.B."/>
            <person name="Primeaux C."/>
            <person name="Tian R."/>
            <person name="Kenton S."/>
            <person name="Jia H.G."/>
            <person name="Lin S.P."/>
            <person name="Qian Y."/>
            <person name="Li S."/>
            <person name="Zhu H."/>
            <person name="Najar F.Z."/>
            <person name="Lai H."/>
            <person name="White J."/>
            <person name="Roe B.A."/>
            <person name="Ferretti J.J."/>
        </authorList>
    </citation>
    <scope>NUCLEOTIDE SEQUENCE [LARGE SCALE GENOMIC DNA]</scope>
    <source>
        <strain>ATCC 700610 / UA159</strain>
    </source>
</reference>
<evidence type="ECO:0000255" key="1">
    <source>
        <dbReference type="HAMAP-Rule" id="MF_01054"/>
    </source>
</evidence>
<evidence type="ECO:0000305" key="2"/>
<organism>
    <name type="scientific">Streptococcus mutans serotype c (strain ATCC 700610 / UA159)</name>
    <dbReference type="NCBI Taxonomy" id="210007"/>
    <lineage>
        <taxon>Bacteria</taxon>
        <taxon>Bacillati</taxon>
        <taxon>Bacillota</taxon>
        <taxon>Bacilli</taxon>
        <taxon>Lactobacillales</taxon>
        <taxon>Streptococcaceae</taxon>
        <taxon>Streptococcus</taxon>
    </lineage>
</organism>
<proteinExistence type="inferred from homology"/>
<comment type="subunit">
    <text evidence="1">Homodimer.</text>
</comment>
<comment type="similarity">
    <text evidence="1">Belongs to the UPF0237 family.</text>
</comment>
<comment type="sequence caution" evidence="2">
    <conflict type="erroneous initiation">
        <sequence resource="EMBL-CDS" id="AAN57858"/>
    </conflict>
</comment>
<name>Y072_STRMU</name>